<dbReference type="EC" id="2.5.1.6" evidence="1"/>
<dbReference type="EMBL" id="CP000806">
    <property type="protein sequence ID" value="ACB51172.1"/>
    <property type="molecule type" value="Genomic_DNA"/>
</dbReference>
<dbReference type="RefSeq" id="WP_009545635.1">
    <property type="nucleotide sequence ID" value="NC_010546.1"/>
</dbReference>
<dbReference type="SMR" id="B1WZM0"/>
<dbReference type="STRING" id="43989.cce_1822"/>
<dbReference type="KEGG" id="cyt:cce_1822"/>
<dbReference type="eggNOG" id="COG0192">
    <property type="taxonomic scope" value="Bacteria"/>
</dbReference>
<dbReference type="HOGENOM" id="CLU_041802_1_1_3"/>
<dbReference type="OrthoDB" id="9801686at2"/>
<dbReference type="UniPathway" id="UPA00315">
    <property type="reaction ID" value="UER00080"/>
</dbReference>
<dbReference type="Proteomes" id="UP000001203">
    <property type="component" value="Chromosome circular"/>
</dbReference>
<dbReference type="GO" id="GO:0005737">
    <property type="term" value="C:cytoplasm"/>
    <property type="evidence" value="ECO:0007669"/>
    <property type="project" value="UniProtKB-SubCell"/>
</dbReference>
<dbReference type="GO" id="GO:0005524">
    <property type="term" value="F:ATP binding"/>
    <property type="evidence" value="ECO:0007669"/>
    <property type="project" value="UniProtKB-UniRule"/>
</dbReference>
<dbReference type="GO" id="GO:0000287">
    <property type="term" value="F:magnesium ion binding"/>
    <property type="evidence" value="ECO:0007669"/>
    <property type="project" value="UniProtKB-UniRule"/>
</dbReference>
<dbReference type="GO" id="GO:0004478">
    <property type="term" value="F:methionine adenosyltransferase activity"/>
    <property type="evidence" value="ECO:0007669"/>
    <property type="project" value="UniProtKB-UniRule"/>
</dbReference>
<dbReference type="GO" id="GO:0006730">
    <property type="term" value="P:one-carbon metabolic process"/>
    <property type="evidence" value="ECO:0007669"/>
    <property type="project" value="UniProtKB-KW"/>
</dbReference>
<dbReference type="GO" id="GO:0006556">
    <property type="term" value="P:S-adenosylmethionine biosynthetic process"/>
    <property type="evidence" value="ECO:0007669"/>
    <property type="project" value="UniProtKB-UniRule"/>
</dbReference>
<dbReference type="CDD" id="cd18079">
    <property type="entry name" value="S-AdoMet_synt"/>
    <property type="match status" value="1"/>
</dbReference>
<dbReference type="FunFam" id="3.30.300.10:FF:000003">
    <property type="entry name" value="S-adenosylmethionine synthase"/>
    <property type="match status" value="1"/>
</dbReference>
<dbReference type="Gene3D" id="3.30.300.10">
    <property type="match status" value="3"/>
</dbReference>
<dbReference type="HAMAP" id="MF_00086">
    <property type="entry name" value="S_AdoMet_synth1"/>
    <property type="match status" value="1"/>
</dbReference>
<dbReference type="InterPro" id="IPR022631">
    <property type="entry name" value="ADOMET_SYNTHASE_CS"/>
</dbReference>
<dbReference type="InterPro" id="IPR022630">
    <property type="entry name" value="S-AdoMet_synt_C"/>
</dbReference>
<dbReference type="InterPro" id="IPR022629">
    <property type="entry name" value="S-AdoMet_synt_central"/>
</dbReference>
<dbReference type="InterPro" id="IPR022628">
    <property type="entry name" value="S-AdoMet_synt_N"/>
</dbReference>
<dbReference type="InterPro" id="IPR002133">
    <property type="entry name" value="S-AdoMet_synthetase"/>
</dbReference>
<dbReference type="InterPro" id="IPR022636">
    <property type="entry name" value="S-AdoMet_synthetase_sfam"/>
</dbReference>
<dbReference type="NCBIfam" id="TIGR01034">
    <property type="entry name" value="metK"/>
    <property type="match status" value="1"/>
</dbReference>
<dbReference type="PANTHER" id="PTHR11964">
    <property type="entry name" value="S-ADENOSYLMETHIONINE SYNTHETASE"/>
    <property type="match status" value="1"/>
</dbReference>
<dbReference type="Pfam" id="PF02773">
    <property type="entry name" value="S-AdoMet_synt_C"/>
    <property type="match status" value="1"/>
</dbReference>
<dbReference type="Pfam" id="PF02772">
    <property type="entry name" value="S-AdoMet_synt_M"/>
    <property type="match status" value="1"/>
</dbReference>
<dbReference type="Pfam" id="PF00438">
    <property type="entry name" value="S-AdoMet_synt_N"/>
    <property type="match status" value="1"/>
</dbReference>
<dbReference type="PIRSF" id="PIRSF000497">
    <property type="entry name" value="MAT"/>
    <property type="match status" value="1"/>
</dbReference>
<dbReference type="SUPFAM" id="SSF55973">
    <property type="entry name" value="S-adenosylmethionine synthetase"/>
    <property type="match status" value="3"/>
</dbReference>
<dbReference type="PROSITE" id="PS00376">
    <property type="entry name" value="ADOMET_SYNTHASE_1"/>
    <property type="match status" value="1"/>
</dbReference>
<dbReference type="PROSITE" id="PS00377">
    <property type="entry name" value="ADOMET_SYNTHASE_2"/>
    <property type="match status" value="1"/>
</dbReference>
<accession>B1WZM0</accession>
<evidence type="ECO:0000255" key="1">
    <source>
        <dbReference type="HAMAP-Rule" id="MF_00086"/>
    </source>
</evidence>
<protein>
    <recommendedName>
        <fullName evidence="1">S-adenosylmethionine synthase</fullName>
        <shortName evidence="1">AdoMet synthase</shortName>
        <ecNumber evidence="1">2.5.1.6</ecNumber>
    </recommendedName>
    <alternativeName>
        <fullName evidence="1">MAT</fullName>
    </alternativeName>
    <alternativeName>
        <fullName evidence="1">Methionine adenosyltransferase</fullName>
    </alternativeName>
</protein>
<feature type="chain" id="PRO_1000093043" description="S-adenosylmethionine synthase">
    <location>
        <begin position="1"/>
        <end position="416"/>
    </location>
</feature>
<feature type="region of interest" description="Flexible loop" evidence="1">
    <location>
        <begin position="100"/>
        <end position="110"/>
    </location>
</feature>
<feature type="binding site" description="in other chain" evidence="1">
    <location>
        <position position="16"/>
    </location>
    <ligand>
        <name>ATP</name>
        <dbReference type="ChEBI" id="CHEBI:30616"/>
        <note>ligand shared between two neighboring subunits</note>
    </ligand>
</feature>
<feature type="binding site" evidence="1">
    <location>
        <position position="18"/>
    </location>
    <ligand>
        <name>Mg(2+)</name>
        <dbReference type="ChEBI" id="CHEBI:18420"/>
    </ligand>
</feature>
<feature type="binding site" evidence="1">
    <location>
        <position position="44"/>
    </location>
    <ligand>
        <name>K(+)</name>
        <dbReference type="ChEBI" id="CHEBI:29103"/>
    </ligand>
</feature>
<feature type="binding site" description="in other chain" evidence="1">
    <location>
        <position position="57"/>
    </location>
    <ligand>
        <name>L-methionine</name>
        <dbReference type="ChEBI" id="CHEBI:57844"/>
        <note>ligand shared between two neighboring subunits</note>
    </ligand>
</feature>
<feature type="binding site" description="in other chain" evidence="1">
    <location>
        <position position="100"/>
    </location>
    <ligand>
        <name>L-methionine</name>
        <dbReference type="ChEBI" id="CHEBI:57844"/>
        <note>ligand shared between two neighboring subunits</note>
    </ligand>
</feature>
<feature type="binding site" description="in other chain" evidence="1">
    <location>
        <begin position="175"/>
        <end position="177"/>
    </location>
    <ligand>
        <name>ATP</name>
        <dbReference type="ChEBI" id="CHEBI:30616"/>
        <note>ligand shared between two neighboring subunits</note>
    </ligand>
</feature>
<feature type="binding site" description="in other chain" evidence="1">
    <location>
        <begin position="251"/>
        <end position="252"/>
    </location>
    <ligand>
        <name>ATP</name>
        <dbReference type="ChEBI" id="CHEBI:30616"/>
        <note>ligand shared between two neighboring subunits</note>
    </ligand>
</feature>
<feature type="binding site" evidence="1">
    <location>
        <position position="260"/>
    </location>
    <ligand>
        <name>ATP</name>
        <dbReference type="ChEBI" id="CHEBI:30616"/>
        <note>ligand shared between two neighboring subunits</note>
    </ligand>
</feature>
<feature type="binding site" evidence="1">
    <location>
        <position position="260"/>
    </location>
    <ligand>
        <name>L-methionine</name>
        <dbReference type="ChEBI" id="CHEBI:57844"/>
        <note>ligand shared between two neighboring subunits</note>
    </ligand>
</feature>
<feature type="binding site" description="in other chain" evidence="1">
    <location>
        <begin position="266"/>
        <end position="267"/>
    </location>
    <ligand>
        <name>ATP</name>
        <dbReference type="ChEBI" id="CHEBI:30616"/>
        <note>ligand shared between two neighboring subunits</note>
    </ligand>
</feature>
<feature type="binding site" evidence="1">
    <location>
        <position position="283"/>
    </location>
    <ligand>
        <name>ATP</name>
        <dbReference type="ChEBI" id="CHEBI:30616"/>
        <note>ligand shared between two neighboring subunits</note>
    </ligand>
</feature>
<feature type="binding site" evidence="1">
    <location>
        <position position="287"/>
    </location>
    <ligand>
        <name>ATP</name>
        <dbReference type="ChEBI" id="CHEBI:30616"/>
        <note>ligand shared between two neighboring subunits</note>
    </ligand>
</feature>
<feature type="binding site" description="in other chain" evidence="1">
    <location>
        <position position="291"/>
    </location>
    <ligand>
        <name>L-methionine</name>
        <dbReference type="ChEBI" id="CHEBI:57844"/>
        <note>ligand shared between two neighboring subunits</note>
    </ligand>
</feature>
<comment type="function">
    <text evidence="1">Catalyzes the formation of S-adenosylmethionine (AdoMet) from methionine and ATP. The overall synthetic reaction is composed of two sequential steps, AdoMet formation and the subsequent tripolyphosphate hydrolysis which occurs prior to release of AdoMet from the enzyme.</text>
</comment>
<comment type="catalytic activity">
    <reaction evidence="1">
        <text>L-methionine + ATP + H2O = S-adenosyl-L-methionine + phosphate + diphosphate</text>
        <dbReference type="Rhea" id="RHEA:21080"/>
        <dbReference type="ChEBI" id="CHEBI:15377"/>
        <dbReference type="ChEBI" id="CHEBI:30616"/>
        <dbReference type="ChEBI" id="CHEBI:33019"/>
        <dbReference type="ChEBI" id="CHEBI:43474"/>
        <dbReference type="ChEBI" id="CHEBI:57844"/>
        <dbReference type="ChEBI" id="CHEBI:59789"/>
        <dbReference type="EC" id="2.5.1.6"/>
    </reaction>
</comment>
<comment type="cofactor">
    <cofactor evidence="1">
        <name>Mg(2+)</name>
        <dbReference type="ChEBI" id="CHEBI:18420"/>
    </cofactor>
    <text evidence="1">Binds 2 divalent ions per subunit.</text>
</comment>
<comment type="cofactor">
    <cofactor evidence="1">
        <name>K(+)</name>
        <dbReference type="ChEBI" id="CHEBI:29103"/>
    </cofactor>
    <text evidence="1">Binds 1 potassium ion per subunit.</text>
</comment>
<comment type="pathway">
    <text evidence="1">Amino-acid biosynthesis; S-adenosyl-L-methionine biosynthesis; S-adenosyl-L-methionine from L-methionine: step 1/1.</text>
</comment>
<comment type="subunit">
    <text evidence="1">Homotetramer; dimer of dimers.</text>
</comment>
<comment type="subcellular location">
    <subcellularLocation>
        <location evidence="1">Cytoplasm</location>
    </subcellularLocation>
</comment>
<comment type="similarity">
    <text evidence="1">Belongs to the AdoMet synthase family.</text>
</comment>
<proteinExistence type="inferred from homology"/>
<organism>
    <name type="scientific">Crocosphaera subtropica (strain ATCC 51142 / BH68)</name>
    <name type="common">Cyanothece sp. (strain ATCC 51142)</name>
    <dbReference type="NCBI Taxonomy" id="43989"/>
    <lineage>
        <taxon>Bacteria</taxon>
        <taxon>Bacillati</taxon>
        <taxon>Cyanobacteriota</taxon>
        <taxon>Cyanophyceae</taxon>
        <taxon>Oscillatoriophycideae</taxon>
        <taxon>Chroococcales</taxon>
        <taxon>Aphanothecaceae</taxon>
        <taxon>Crocosphaera</taxon>
        <taxon>Crocosphaera subtropica</taxon>
    </lineage>
</organism>
<sequence length="416" mass="44936">MSRRYLFTSESVTEGHPDKICDQISDTIIDTLLYHDDQSRVAAEVVVNTGLVLITGEVTSKANVNFVELARKKIAEIGYTNADNGFSANSCAVLVALDEQSPDIAQGVTQAHEQRQALSDDELDQIGAGDQGIMFGYACNETPELMPLPISLAHRFSRRLAAVRKTGDLGYLRPDGKTQVSIVYEDGIPVGIDTILISTQHDETIDSITDNDGVQAKIKSDLWDAVVLPVLDNIGIKPSQETRFLVNPTGKFVIGGPQGDAGLTGRKIIVDTYGGYSRHGGGAFSGKDPTKVDRSAAYACRYVAKNIVAAGLAEKCEVQLSYAIGVARPVSILVETFGTGKVDENKLLDAVKELFELRPAGIIQALNLRQLPSQRGGRFYQDVAAYGHFGRNDLDLPWEATDKAALLKEALLKVGV</sequence>
<name>METK_CROS5</name>
<keyword id="KW-0067">ATP-binding</keyword>
<keyword id="KW-0963">Cytoplasm</keyword>
<keyword id="KW-0460">Magnesium</keyword>
<keyword id="KW-0479">Metal-binding</keyword>
<keyword id="KW-0547">Nucleotide-binding</keyword>
<keyword id="KW-0554">One-carbon metabolism</keyword>
<keyword id="KW-0630">Potassium</keyword>
<keyword id="KW-1185">Reference proteome</keyword>
<keyword id="KW-0808">Transferase</keyword>
<reference key="1">
    <citation type="journal article" date="2008" name="Proc. Natl. Acad. Sci. U.S.A.">
        <title>The genome of Cyanothece 51142, a unicellular diazotrophic cyanobacterium important in the marine nitrogen cycle.</title>
        <authorList>
            <person name="Welsh E.A."/>
            <person name="Liberton M."/>
            <person name="Stoeckel J."/>
            <person name="Loh T."/>
            <person name="Elvitigala T."/>
            <person name="Wang C."/>
            <person name="Wollam A."/>
            <person name="Fulton R.S."/>
            <person name="Clifton S.W."/>
            <person name="Jacobs J.M."/>
            <person name="Aurora R."/>
            <person name="Ghosh B.K."/>
            <person name="Sherman L.A."/>
            <person name="Smith R.D."/>
            <person name="Wilson R.K."/>
            <person name="Pakrasi H.B."/>
        </authorList>
    </citation>
    <scope>NUCLEOTIDE SEQUENCE [LARGE SCALE GENOMIC DNA]</scope>
    <source>
        <strain>ATCC 51142 / BH68</strain>
    </source>
</reference>
<gene>
    <name evidence="1" type="primary">metK</name>
    <name type="ordered locus">cce_1822</name>
</gene>